<evidence type="ECO:0000250" key="1"/>
<evidence type="ECO:0000255" key="2"/>
<evidence type="ECO:0000269" key="3">
    <source>
    </source>
</evidence>
<evidence type="ECO:0000303" key="4">
    <source>
    </source>
</evidence>
<evidence type="ECO:0000305" key="5"/>
<comment type="function">
    <text>Core component of nucleosome. Nucleosomes wrap and compact DNA into chromatin, limiting DNA accessibility to the cellular machineries which require DNA as a template. Histones thereby play a central role in transcription regulation, DNA repair, DNA replication and chromosomal stability. DNA accessibility is regulated via a complex set of post-translational modifications of histones, also called histone code, and nucleosome remodeling.</text>
</comment>
<comment type="subunit">
    <text>The nucleosome is a histone octamer containing two molecules each of H2A, H2B, H3 and H4 assembled in one H3-H4 heterotetramer and two H2A-H2B heterodimers. The octamer wraps approximately 147 bp of DNA.</text>
</comment>
<comment type="subcellular location">
    <subcellularLocation>
        <location evidence="1">Nucleus</location>
    </subcellularLocation>
    <subcellularLocation>
        <location evidence="1">Chromosome</location>
    </subcellularLocation>
</comment>
<comment type="mass spectrometry" mass="15330.0" method="MALDI" evidence="3"/>
<comment type="similarity">
    <text evidence="2">Belongs to the histone H3 family.</text>
</comment>
<accession>P83864</accession>
<protein>
    <recommendedName>
        <fullName>Histone H3</fullName>
    </recommendedName>
</protein>
<keyword id="KW-0158">Chromosome</keyword>
<keyword id="KW-0903">Direct protein sequencing</keyword>
<keyword id="KW-0238">DNA-binding</keyword>
<keyword id="KW-0544">Nucleosome core</keyword>
<keyword id="KW-0539">Nucleus</keyword>
<organism>
    <name type="scientific">Penaeus vannamei</name>
    <name type="common">Whiteleg shrimp</name>
    <name type="synonym">Litopenaeus vannamei</name>
    <dbReference type="NCBI Taxonomy" id="6689"/>
    <lineage>
        <taxon>Eukaryota</taxon>
        <taxon>Metazoa</taxon>
        <taxon>Ecdysozoa</taxon>
        <taxon>Arthropoda</taxon>
        <taxon>Crustacea</taxon>
        <taxon>Multicrustacea</taxon>
        <taxon>Malacostraca</taxon>
        <taxon>Eumalacostraca</taxon>
        <taxon>Eucarida</taxon>
        <taxon>Decapoda</taxon>
        <taxon>Dendrobranchiata</taxon>
        <taxon>Penaeoidea</taxon>
        <taxon>Penaeidae</taxon>
        <taxon>Penaeus</taxon>
    </lineage>
</organism>
<dbReference type="GO" id="GO:0000786">
    <property type="term" value="C:nucleosome"/>
    <property type="evidence" value="ECO:0007669"/>
    <property type="project" value="UniProtKB-KW"/>
</dbReference>
<dbReference type="GO" id="GO:0005634">
    <property type="term" value="C:nucleus"/>
    <property type="evidence" value="ECO:0007669"/>
    <property type="project" value="UniProtKB-SubCell"/>
</dbReference>
<dbReference type="GO" id="GO:0003677">
    <property type="term" value="F:DNA binding"/>
    <property type="evidence" value="ECO:0007669"/>
    <property type="project" value="UniProtKB-KW"/>
</dbReference>
<dbReference type="GO" id="GO:0046982">
    <property type="term" value="F:protein heterodimerization activity"/>
    <property type="evidence" value="ECO:0007669"/>
    <property type="project" value="InterPro"/>
</dbReference>
<dbReference type="GO" id="GO:0030527">
    <property type="term" value="F:structural constituent of chromatin"/>
    <property type="evidence" value="ECO:0007669"/>
    <property type="project" value="InterPro"/>
</dbReference>
<dbReference type="Gene3D" id="1.10.20.10">
    <property type="entry name" value="Histone, subunit A"/>
    <property type="match status" value="1"/>
</dbReference>
<dbReference type="InterPro" id="IPR009072">
    <property type="entry name" value="Histone-fold"/>
</dbReference>
<dbReference type="InterPro" id="IPR000164">
    <property type="entry name" value="Histone_H3/CENP-A"/>
</dbReference>
<dbReference type="PANTHER" id="PTHR11426">
    <property type="entry name" value="HISTONE H3"/>
    <property type="match status" value="1"/>
</dbReference>
<dbReference type="SUPFAM" id="SSF47113">
    <property type="entry name" value="Histone-fold"/>
    <property type="match status" value="1"/>
</dbReference>
<feature type="chain" id="PRO_0000221308" description="Histone H3">
    <location>
        <begin position="1" status="less than"/>
        <end position="43" status="greater than"/>
    </location>
</feature>
<feature type="non-consecutive residues" evidence="4">
    <location>
        <begin position="13"/>
        <end position="14"/>
    </location>
</feature>
<feature type="non-consecutive residues" evidence="4">
    <location>
        <begin position="26"/>
        <end position="27"/>
    </location>
</feature>
<feature type="non-consecutive residues" evidence="4">
    <location>
        <begin position="37"/>
        <end position="38"/>
    </location>
</feature>
<feature type="non-terminal residue" evidence="4">
    <location>
        <position position="1"/>
    </location>
</feature>
<feature type="non-terminal residue" evidence="4">
    <location>
        <position position="43"/>
    </location>
</feature>
<proteinExistence type="evidence at protein level"/>
<reference evidence="5" key="1">
    <citation type="journal article" date="2004" name="Eur. J. Biochem.">
        <title>Antimicrobial activity of histones from hemocytes of the Pacific white shrimp.</title>
        <authorList>
            <person name="Patat S.A."/>
            <person name="Carnegie R.B."/>
            <person name="Kingsbury C."/>
            <person name="Gross P.S."/>
            <person name="Chapman R."/>
            <person name="Schey K.L."/>
        </authorList>
    </citation>
    <scope>PROTEIN SEQUENCE</scope>
    <scope>MASS SPECTROMETRY</scope>
    <source>
        <tissue evidence="3">Hemocyte</tissue>
    </source>
</reference>
<sequence length="43" mass="5148">KPHRYRPGTVALRSTELLIRKLPFQREIAQDFKTDLRDIQLAR</sequence>
<name>H3_PENVA</name>